<proteinExistence type="evidence at transcript level"/>
<reference key="1">
    <citation type="journal article" date="2009" name="PLoS Biol.">
        <title>Lineage-specific biology revealed by a finished genome assembly of the mouse.</title>
        <authorList>
            <person name="Church D.M."/>
            <person name="Goodstadt L."/>
            <person name="Hillier L.W."/>
            <person name="Zody M.C."/>
            <person name="Goldstein S."/>
            <person name="She X."/>
            <person name="Bult C.J."/>
            <person name="Agarwala R."/>
            <person name="Cherry J.L."/>
            <person name="DiCuccio M."/>
            <person name="Hlavina W."/>
            <person name="Kapustin Y."/>
            <person name="Meric P."/>
            <person name="Maglott D."/>
            <person name="Birtle Z."/>
            <person name="Marques A.C."/>
            <person name="Graves T."/>
            <person name="Zhou S."/>
            <person name="Teague B."/>
            <person name="Potamousis K."/>
            <person name="Churas C."/>
            <person name="Place M."/>
            <person name="Herschleb J."/>
            <person name="Runnheim R."/>
            <person name="Forrest D."/>
            <person name="Amos-Landgraf J."/>
            <person name="Schwartz D.C."/>
            <person name="Cheng Z."/>
            <person name="Lindblad-Toh K."/>
            <person name="Eichler E.E."/>
            <person name="Ponting C.P."/>
        </authorList>
    </citation>
    <scope>NUCLEOTIDE SEQUENCE [LARGE SCALE GENOMIC DNA]</scope>
    <source>
        <strain>C57BL/6J</strain>
    </source>
</reference>
<reference key="2">
    <citation type="journal article" date="2004" name="Genome Res.">
        <title>The status, quality, and expansion of the NIH full-length cDNA project: the Mammalian Gene Collection (MGC).</title>
        <authorList>
            <consortium name="The MGC Project Team"/>
        </authorList>
    </citation>
    <scope>NUCLEOTIDE SEQUENCE [LARGE SCALE MRNA]</scope>
    <source>
        <tissue>Eye</tissue>
    </source>
</reference>
<reference key="3">
    <citation type="journal article" date="2005" name="Science">
        <title>The transcriptional landscape of the mammalian genome.</title>
        <authorList>
            <person name="Carninci P."/>
            <person name="Kasukawa T."/>
            <person name="Katayama S."/>
            <person name="Gough J."/>
            <person name="Frith M.C."/>
            <person name="Maeda N."/>
            <person name="Oyama R."/>
            <person name="Ravasi T."/>
            <person name="Lenhard B."/>
            <person name="Wells C."/>
            <person name="Kodzius R."/>
            <person name="Shimokawa K."/>
            <person name="Bajic V.B."/>
            <person name="Brenner S.E."/>
            <person name="Batalov S."/>
            <person name="Forrest A.R."/>
            <person name="Zavolan M."/>
            <person name="Davis M.J."/>
            <person name="Wilming L.G."/>
            <person name="Aidinis V."/>
            <person name="Allen J.E."/>
            <person name="Ambesi-Impiombato A."/>
            <person name="Apweiler R."/>
            <person name="Aturaliya R.N."/>
            <person name="Bailey T.L."/>
            <person name="Bansal M."/>
            <person name="Baxter L."/>
            <person name="Beisel K.W."/>
            <person name="Bersano T."/>
            <person name="Bono H."/>
            <person name="Chalk A.M."/>
            <person name="Chiu K.P."/>
            <person name="Choudhary V."/>
            <person name="Christoffels A."/>
            <person name="Clutterbuck D.R."/>
            <person name="Crowe M.L."/>
            <person name="Dalla E."/>
            <person name="Dalrymple B.P."/>
            <person name="de Bono B."/>
            <person name="Della Gatta G."/>
            <person name="di Bernardo D."/>
            <person name="Down T."/>
            <person name="Engstrom P."/>
            <person name="Fagiolini M."/>
            <person name="Faulkner G."/>
            <person name="Fletcher C.F."/>
            <person name="Fukushima T."/>
            <person name="Furuno M."/>
            <person name="Futaki S."/>
            <person name="Gariboldi M."/>
            <person name="Georgii-Hemming P."/>
            <person name="Gingeras T.R."/>
            <person name="Gojobori T."/>
            <person name="Green R.E."/>
            <person name="Gustincich S."/>
            <person name="Harbers M."/>
            <person name="Hayashi Y."/>
            <person name="Hensch T.K."/>
            <person name="Hirokawa N."/>
            <person name="Hill D."/>
            <person name="Huminiecki L."/>
            <person name="Iacono M."/>
            <person name="Ikeo K."/>
            <person name="Iwama A."/>
            <person name="Ishikawa T."/>
            <person name="Jakt M."/>
            <person name="Kanapin A."/>
            <person name="Katoh M."/>
            <person name="Kawasawa Y."/>
            <person name="Kelso J."/>
            <person name="Kitamura H."/>
            <person name="Kitano H."/>
            <person name="Kollias G."/>
            <person name="Krishnan S.P."/>
            <person name="Kruger A."/>
            <person name="Kummerfeld S.K."/>
            <person name="Kurochkin I.V."/>
            <person name="Lareau L.F."/>
            <person name="Lazarevic D."/>
            <person name="Lipovich L."/>
            <person name="Liu J."/>
            <person name="Liuni S."/>
            <person name="McWilliam S."/>
            <person name="Madan Babu M."/>
            <person name="Madera M."/>
            <person name="Marchionni L."/>
            <person name="Matsuda H."/>
            <person name="Matsuzawa S."/>
            <person name="Miki H."/>
            <person name="Mignone F."/>
            <person name="Miyake S."/>
            <person name="Morris K."/>
            <person name="Mottagui-Tabar S."/>
            <person name="Mulder N."/>
            <person name="Nakano N."/>
            <person name="Nakauchi H."/>
            <person name="Ng P."/>
            <person name="Nilsson R."/>
            <person name="Nishiguchi S."/>
            <person name="Nishikawa S."/>
            <person name="Nori F."/>
            <person name="Ohara O."/>
            <person name="Okazaki Y."/>
            <person name="Orlando V."/>
            <person name="Pang K.C."/>
            <person name="Pavan W.J."/>
            <person name="Pavesi G."/>
            <person name="Pesole G."/>
            <person name="Petrovsky N."/>
            <person name="Piazza S."/>
            <person name="Reed J."/>
            <person name="Reid J.F."/>
            <person name="Ring B.Z."/>
            <person name="Ringwald M."/>
            <person name="Rost B."/>
            <person name="Ruan Y."/>
            <person name="Salzberg S.L."/>
            <person name="Sandelin A."/>
            <person name="Schneider C."/>
            <person name="Schoenbach C."/>
            <person name="Sekiguchi K."/>
            <person name="Semple C.A."/>
            <person name="Seno S."/>
            <person name="Sessa L."/>
            <person name="Sheng Y."/>
            <person name="Shibata Y."/>
            <person name="Shimada H."/>
            <person name="Shimada K."/>
            <person name="Silva D."/>
            <person name="Sinclair B."/>
            <person name="Sperling S."/>
            <person name="Stupka E."/>
            <person name="Sugiura K."/>
            <person name="Sultana R."/>
            <person name="Takenaka Y."/>
            <person name="Taki K."/>
            <person name="Tammoja K."/>
            <person name="Tan S.L."/>
            <person name="Tang S."/>
            <person name="Taylor M.S."/>
            <person name="Tegner J."/>
            <person name="Teichmann S.A."/>
            <person name="Ueda H.R."/>
            <person name="van Nimwegen E."/>
            <person name="Verardo R."/>
            <person name="Wei C.L."/>
            <person name="Yagi K."/>
            <person name="Yamanishi H."/>
            <person name="Zabarovsky E."/>
            <person name="Zhu S."/>
            <person name="Zimmer A."/>
            <person name="Hide W."/>
            <person name="Bult C."/>
            <person name="Grimmond S.M."/>
            <person name="Teasdale R.D."/>
            <person name="Liu E.T."/>
            <person name="Brusic V."/>
            <person name="Quackenbush J."/>
            <person name="Wahlestedt C."/>
            <person name="Mattick J.S."/>
            <person name="Hume D.A."/>
            <person name="Kai C."/>
            <person name="Sasaki D."/>
            <person name="Tomaru Y."/>
            <person name="Fukuda S."/>
            <person name="Kanamori-Katayama M."/>
            <person name="Suzuki M."/>
            <person name="Aoki J."/>
            <person name="Arakawa T."/>
            <person name="Iida J."/>
            <person name="Imamura K."/>
            <person name="Itoh M."/>
            <person name="Kato T."/>
            <person name="Kawaji H."/>
            <person name="Kawagashira N."/>
            <person name="Kawashima T."/>
            <person name="Kojima M."/>
            <person name="Kondo S."/>
            <person name="Konno H."/>
            <person name="Nakano K."/>
            <person name="Ninomiya N."/>
            <person name="Nishio T."/>
            <person name="Okada M."/>
            <person name="Plessy C."/>
            <person name="Shibata K."/>
            <person name="Shiraki T."/>
            <person name="Suzuki S."/>
            <person name="Tagami M."/>
            <person name="Waki K."/>
            <person name="Watahiki A."/>
            <person name="Okamura-Oho Y."/>
            <person name="Suzuki H."/>
            <person name="Kawai J."/>
            <person name="Hayashizaki Y."/>
        </authorList>
    </citation>
    <scope>NUCLEOTIDE SEQUENCE [LARGE SCALE MRNA] OF 167-466</scope>
    <source>
        <strain>C57BL/6J</strain>
        <tissue>Hippocampus</tissue>
    </source>
</reference>
<reference key="4">
    <citation type="journal article" date="2009" name="Cereb. Cortex">
        <title>Paraneoplastic antigen-like 5 gene (PNMA5) is preferentially expressed in the association areas in a primate specific manner.</title>
        <authorList>
            <person name="Takaji M."/>
            <person name="Komatsu Y."/>
            <person name="Watakabe A."/>
            <person name="Hashikawa T."/>
            <person name="Yamamori T."/>
        </authorList>
    </citation>
    <scope>TISSUE SPECIFICITY</scope>
</reference>
<comment type="subcellular location">
    <subcellularLocation>
        <location evidence="1">Nucleus</location>
        <location evidence="1">Nucleolus</location>
    </subcellularLocation>
</comment>
<comment type="tissue specificity">
    <text evidence="4">Expressed in the cerebrum and cerebellum.</text>
</comment>
<comment type="similarity">
    <text evidence="5">Belongs to the PNMA family.</text>
</comment>
<accession>Q8JZW8</accession>
<accession>Q3URF3</accession>
<sequence>MPLNLLQDWCRGEHLNTQRSMLILGIPEDCSEDEFEETLHEALKHLGRYRIIGRMFRREENAQAFLVELARDFDYALVPREIEGKGGPWEVVVKPPHSDDEFLNRLNHFLEEERRTVSDMNRVLGTHSNHSPTKTTISADFWVWAQTLGAVMQPLLEQMLYRELRVFSGNTISIPGLLAFDSWLEHTTEMLQMWQVPEVEKRRRLMECLRGPALQVVNVLRANNAAITVKECLEALRQVFGSVDNRKIAQLKFCKAYQEPGEKVSSFVVRLETLLQKALEKNAISRKNVNQTRLKRILGGAILSAKLREKLKMLKQRRRPPGFLALVKLFREEEEEWEATRGSERSCYEGLELGPSPSNIGSEERELFVPAFGSVLEERPYQGSRRRRHRRRGQHRKGGVPRDDSQGTRKQNYDTFCYSCGEDGHIRVHCFNPSNRTLVKQKRQAAMEKGNRSWAWEKSHPKPKTK</sequence>
<dbReference type="EMBL" id="BX813330">
    <property type="status" value="NOT_ANNOTATED_CDS"/>
    <property type="molecule type" value="Genomic_DNA"/>
</dbReference>
<dbReference type="EMBL" id="BC036726">
    <property type="protein sequence ID" value="AAH36726.1"/>
    <property type="molecule type" value="mRNA"/>
</dbReference>
<dbReference type="EMBL" id="AK141560">
    <property type="protein sequence ID" value="BAE24735.1"/>
    <property type="molecule type" value="mRNA"/>
</dbReference>
<dbReference type="CCDS" id="CCDS30192.1"/>
<dbReference type="RefSeq" id="NP_694809.1">
    <property type="nucleotide sequence ID" value="NM_153169.2"/>
</dbReference>
<dbReference type="SMR" id="Q8JZW8"/>
<dbReference type="BioGRID" id="232774">
    <property type="interactions" value="1"/>
</dbReference>
<dbReference type="FunCoup" id="Q8JZW8">
    <property type="interactions" value="4"/>
</dbReference>
<dbReference type="STRING" id="10090.ENSMUSP00000054177"/>
<dbReference type="iPTMnet" id="Q8JZW8"/>
<dbReference type="PhosphoSitePlus" id="Q8JZW8"/>
<dbReference type="PaxDb" id="10090-ENSMUSP00000054177"/>
<dbReference type="ProteomicsDB" id="289352"/>
<dbReference type="Antibodypedia" id="45169">
    <property type="antibodies" value="195 antibodies from 13 providers"/>
</dbReference>
<dbReference type="DNASU" id="245468"/>
<dbReference type="Ensembl" id="ENSMUST00000060418.8">
    <property type="protein sequence ID" value="ENSMUSP00000054177.7"/>
    <property type="gene ID" value="ENSMUSG00000046287.8"/>
</dbReference>
<dbReference type="GeneID" id="245468"/>
<dbReference type="KEGG" id="mmu:245468"/>
<dbReference type="UCSC" id="uc009tla.1">
    <property type="organism name" value="mouse"/>
</dbReference>
<dbReference type="AGR" id="MGI:2180565"/>
<dbReference type="CTD" id="29944"/>
<dbReference type="MGI" id="MGI:2180565">
    <property type="gene designation" value="Pnma3"/>
</dbReference>
<dbReference type="VEuPathDB" id="HostDB:ENSMUSG00000046287"/>
<dbReference type="eggNOG" id="ENOG502SKT0">
    <property type="taxonomic scope" value="Eukaryota"/>
</dbReference>
<dbReference type="GeneTree" id="ENSGT01030000234522"/>
<dbReference type="HOGENOM" id="CLU_014694_0_1_1"/>
<dbReference type="InParanoid" id="Q8JZW8"/>
<dbReference type="OMA" id="MDERFCY"/>
<dbReference type="OrthoDB" id="115435at2759"/>
<dbReference type="PhylomeDB" id="Q8JZW8"/>
<dbReference type="TreeFam" id="TF335054"/>
<dbReference type="BioGRID-ORCS" id="245468">
    <property type="hits" value="0 hits in 76 CRISPR screens"/>
</dbReference>
<dbReference type="ChiTaRS" id="Pnma3">
    <property type="organism name" value="mouse"/>
</dbReference>
<dbReference type="PRO" id="PR:Q8JZW8"/>
<dbReference type="Proteomes" id="UP000000589">
    <property type="component" value="Chromosome X"/>
</dbReference>
<dbReference type="RNAct" id="Q8JZW8">
    <property type="molecule type" value="protein"/>
</dbReference>
<dbReference type="Bgee" id="ENSMUSG00000046287">
    <property type="expression patterns" value="Expressed in lumbar subsegment of spinal cord and 46 other cell types or tissues"/>
</dbReference>
<dbReference type="GO" id="GO:0005730">
    <property type="term" value="C:nucleolus"/>
    <property type="evidence" value="ECO:0007669"/>
    <property type="project" value="UniProtKB-SubCell"/>
</dbReference>
<dbReference type="GO" id="GO:0003676">
    <property type="term" value="F:nucleic acid binding"/>
    <property type="evidence" value="ECO:0007669"/>
    <property type="project" value="InterPro"/>
</dbReference>
<dbReference type="GO" id="GO:0008270">
    <property type="term" value="F:zinc ion binding"/>
    <property type="evidence" value="ECO:0007669"/>
    <property type="project" value="UniProtKB-KW"/>
</dbReference>
<dbReference type="InterPro" id="IPR026523">
    <property type="entry name" value="PNMA"/>
</dbReference>
<dbReference type="InterPro" id="IPR048270">
    <property type="entry name" value="PNMA_C"/>
</dbReference>
<dbReference type="InterPro" id="IPR048271">
    <property type="entry name" value="PNMA_N"/>
</dbReference>
<dbReference type="InterPro" id="IPR001878">
    <property type="entry name" value="Znf_CCHC"/>
</dbReference>
<dbReference type="PANTHER" id="PTHR23095">
    <property type="entry name" value="PARANEOPLASTIC ANTIGEN"/>
    <property type="match status" value="1"/>
</dbReference>
<dbReference type="PANTHER" id="PTHR23095:SF22">
    <property type="entry name" value="PARANEOPLASTIC ANTIGEN MA3"/>
    <property type="match status" value="1"/>
</dbReference>
<dbReference type="Pfam" id="PF14893">
    <property type="entry name" value="PNMA"/>
    <property type="match status" value="1"/>
</dbReference>
<dbReference type="Pfam" id="PF20846">
    <property type="entry name" value="PNMA_N"/>
    <property type="match status" value="1"/>
</dbReference>
<dbReference type="PROSITE" id="PS50158">
    <property type="entry name" value="ZF_CCHC"/>
    <property type="match status" value="1"/>
</dbReference>
<gene>
    <name type="primary">Pnma3</name>
</gene>
<protein>
    <recommendedName>
        <fullName>Paraneoplastic antigen Ma3 homolog</fullName>
    </recommendedName>
</protein>
<keyword id="KW-0479">Metal-binding</keyword>
<keyword id="KW-0539">Nucleus</keyword>
<keyword id="KW-1185">Reference proteome</keyword>
<keyword id="KW-0862">Zinc</keyword>
<keyword id="KW-0863">Zinc-finger</keyword>
<feature type="chain" id="PRO_0000280216" description="Paraneoplastic antigen Ma3 homolog">
    <location>
        <begin position="1"/>
        <end position="466"/>
    </location>
</feature>
<feature type="zinc finger region" description="CCHC-type" evidence="2">
    <location>
        <begin position="415"/>
        <end position="432"/>
    </location>
</feature>
<feature type="region of interest" description="Disordered" evidence="3">
    <location>
        <begin position="379"/>
        <end position="408"/>
    </location>
</feature>
<feature type="region of interest" description="Disordered" evidence="3">
    <location>
        <begin position="441"/>
        <end position="466"/>
    </location>
</feature>
<feature type="compositionally biased region" description="Basic residues" evidence="3">
    <location>
        <begin position="384"/>
        <end position="399"/>
    </location>
</feature>
<feature type="compositionally biased region" description="Basic and acidic residues" evidence="3">
    <location>
        <begin position="445"/>
        <end position="460"/>
    </location>
</feature>
<organism>
    <name type="scientific">Mus musculus</name>
    <name type="common">Mouse</name>
    <dbReference type="NCBI Taxonomy" id="10090"/>
    <lineage>
        <taxon>Eukaryota</taxon>
        <taxon>Metazoa</taxon>
        <taxon>Chordata</taxon>
        <taxon>Craniata</taxon>
        <taxon>Vertebrata</taxon>
        <taxon>Euteleostomi</taxon>
        <taxon>Mammalia</taxon>
        <taxon>Eutheria</taxon>
        <taxon>Euarchontoglires</taxon>
        <taxon>Glires</taxon>
        <taxon>Rodentia</taxon>
        <taxon>Myomorpha</taxon>
        <taxon>Muroidea</taxon>
        <taxon>Muridae</taxon>
        <taxon>Murinae</taxon>
        <taxon>Mus</taxon>
        <taxon>Mus</taxon>
    </lineage>
</organism>
<evidence type="ECO:0000250" key="1"/>
<evidence type="ECO:0000255" key="2">
    <source>
        <dbReference type="PROSITE-ProRule" id="PRU00047"/>
    </source>
</evidence>
<evidence type="ECO:0000256" key="3">
    <source>
        <dbReference type="SAM" id="MobiDB-lite"/>
    </source>
</evidence>
<evidence type="ECO:0000269" key="4">
    <source>
    </source>
</evidence>
<evidence type="ECO:0000305" key="5"/>
<name>PNMA3_MOUSE</name>